<sequence length="249" mass="27461">MAYSGAQKALKSDKLDEAQALAKSCAGRPDFLPCDGLSICATHSHGKCFKLHWCCYLGWCHCKYVYQPMTNVAQLPSTPVPAAPSDCPDTIDLSISLTERFLRISPCFQAPPCPESPKYCNIAELFIDDYIVKRINGKMCYVQRPQAHVEPAQMNPIQKQHTEDKQIVEETVKGPKMGHCSSPSTSEDSGINALGGHFLESCEEESEEEDELSTDGHSSPGSLWDQDECTLLSPSKSMVEIIENIETTV</sequence>
<reference key="1">
    <citation type="journal article" date="2013" name="Nature">
        <title>The zebrafish reference genome sequence and its relationship to the human genome.</title>
        <authorList>
            <person name="Howe K."/>
            <person name="Clark M.D."/>
            <person name="Torroja C.F."/>
            <person name="Torrance J."/>
            <person name="Berthelot C."/>
            <person name="Muffato M."/>
            <person name="Collins J.E."/>
            <person name="Humphray S."/>
            <person name="McLaren K."/>
            <person name="Matthews L."/>
            <person name="McLaren S."/>
            <person name="Sealy I."/>
            <person name="Caccamo M."/>
            <person name="Churcher C."/>
            <person name="Scott C."/>
            <person name="Barrett J.C."/>
            <person name="Koch R."/>
            <person name="Rauch G.J."/>
            <person name="White S."/>
            <person name="Chow W."/>
            <person name="Kilian B."/>
            <person name="Quintais L.T."/>
            <person name="Guerra-Assuncao J.A."/>
            <person name="Zhou Y."/>
            <person name="Gu Y."/>
            <person name="Yen J."/>
            <person name="Vogel J.H."/>
            <person name="Eyre T."/>
            <person name="Redmond S."/>
            <person name="Banerjee R."/>
            <person name="Chi J."/>
            <person name="Fu B."/>
            <person name="Langley E."/>
            <person name="Maguire S.F."/>
            <person name="Laird G.K."/>
            <person name="Lloyd D."/>
            <person name="Kenyon E."/>
            <person name="Donaldson S."/>
            <person name="Sehra H."/>
            <person name="Almeida-King J."/>
            <person name="Loveland J."/>
            <person name="Trevanion S."/>
            <person name="Jones M."/>
            <person name="Quail M."/>
            <person name="Willey D."/>
            <person name="Hunt A."/>
            <person name="Burton J."/>
            <person name="Sims S."/>
            <person name="McLay K."/>
            <person name="Plumb B."/>
            <person name="Davis J."/>
            <person name="Clee C."/>
            <person name="Oliver K."/>
            <person name="Clark R."/>
            <person name="Riddle C."/>
            <person name="Elliot D."/>
            <person name="Threadgold G."/>
            <person name="Harden G."/>
            <person name="Ware D."/>
            <person name="Begum S."/>
            <person name="Mortimore B."/>
            <person name="Kerry G."/>
            <person name="Heath P."/>
            <person name="Phillimore B."/>
            <person name="Tracey A."/>
            <person name="Corby N."/>
            <person name="Dunn M."/>
            <person name="Johnson C."/>
            <person name="Wood J."/>
            <person name="Clark S."/>
            <person name="Pelan S."/>
            <person name="Griffiths G."/>
            <person name="Smith M."/>
            <person name="Glithero R."/>
            <person name="Howden P."/>
            <person name="Barker N."/>
            <person name="Lloyd C."/>
            <person name="Stevens C."/>
            <person name="Harley J."/>
            <person name="Holt K."/>
            <person name="Panagiotidis G."/>
            <person name="Lovell J."/>
            <person name="Beasley H."/>
            <person name="Henderson C."/>
            <person name="Gordon D."/>
            <person name="Auger K."/>
            <person name="Wright D."/>
            <person name="Collins J."/>
            <person name="Raisen C."/>
            <person name="Dyer L."/>
            <person name="Leung K."/>
            <person name="Robertson L."/>
            <person name="Ambridge K."/>
            <person name="Leongamornlert D."/>
            <person name="McGuire S."/>
            <person name="Gilderthorp R."/>
            <person name="Griffiths C."/>
            <person name="Manthravadi D."/>
            <person name="Nichol S."/>
            <person name="Barker G."/>
            <person name="Whitehead S."/>
            <person name="Kay M."/>
            <person name="Brown J."/>
            <person name="Murnane C."/>
            <person name="Gray E."/>
            <person name="Humphries M."/>
            <person name="Sycamore N."/>
            <person name="Barker D."/>
            <person name="Saunders D."/>
            <person name="Wallis J."/>
            <person name="Babbage A."/>
            <person name="Hammond S."/>
            <person name="Mashreghi-Mohammadi M."/>
            <person name="Barr L."/>
            <person name="Martin S."/>
            <person name="Wray P."/>
            <person name="Ellington A."/>
            <person name="Matthews N."/>
            <person name="Ellwood M."/>
            <person name="Woodmansey R."/>
            <person name="Clark G."/>
            <person name="Cooper J."/>
            <person name="Tromans A."/>
            <person name="Grafham D."/>
            <person name="Skuce C."/>
            <person name="Pandian R."/>
            <person name="Andrews R."/>
            <person name="Harrison E."/>
            <person name="Kimberley A."/>
            <person name="Garnett J."/>
            <person name="Fosker N."/>
            <person name="Hall R."/>
            <person name="Garner P."/>
            <person name="Kelly D."/>
            <person name="Bird C."/>
            <person name="Palmer S."/>
            <person name="Gehring I."/>
            <person name="Berger A."/>
            <person name="Dooley C.M."/>
            <person name="Ersan-Urun Z."/>
            <person name="Eser C."/>
            <person name="Geiger H."/>
            <person name="Geisler M."/>
            <person name="Karotki L."/>
            <person name="Kirn A."/>
            <person name="Konantz J."/>
            <person name="Konantz M."/>
            <person name="Oberlander M."/>
            <person name="Rudolph-Geiger S."/>
            <person name="Teucke M."/>
            <person name="Lanz C."/>
            <person name="Raddatz G."/>
            <person name="Osoegawa K."/>
            <person name="Zhu B."/>
            <person name="Rapp A."/>
            <person name="Widaa S."/>
            <person name="Langford C."/>
            <person name="Yang F."/>
            <person name="Schuster S.C."/>
            <person name="Carter N.P."/>
            <person name="Harrow J."/>
            <person name="Ning Z."/>
            <person name="Herrero J."/>
            <person name="Searle S.M."/>
            <person name="Enright A."/>
            <person name="Geisler R."/>
            <person name="Plasterk R.H."/>
            <person name="Lee C."/>
            <person name="Westerfield M."/>
            <person name="de Jong P.J."/>
            <person name="Zon L.I."/>
            <person name="Postlethwait J.H."/>
            <person name="Nusslein-Volhard C."/>
            <person name="Hubbard T.J."/>
            <person name="Roest Crollius H."/>
            <person name="Rogers J."/>
            <person name="Stemple D.L."/>
        </authorList>
    </citation>
    <scope>NUCLEOTIDE SEQUENCE [LARGE SCALE GENOMIC DNA]</scope>
    <source>
        <strain>Tuebingen</strain>
    </source>
</reference>
<reference key="2">
    <citation type="submission" date="2007-03" db="EMBL/GenBank/DDBJ databases">
        <authorList>
            <consortium name="NIH - Zebrafish Gene Collection (ZGC) project"/>
        </authorList>
    </citation>
    <scope>NUCLEOTIDE SEQUENCE [LARGE SCALE MRNA]</scope>
    <source>
        <tissue>Embryo</tissue>
    </source>
</reference>
<reference key="3">
    <citation type="journal article" date="2019" name="Pharmaceuticals (Basel)">
        <title>C3orf70 Is Involved in Neural and Neurobehavioral Development.</title>
        <authorList>
            <person name="Ashikawa Y."/>
            <person name="Shiromizu T."/>
            <person name="Miura K."/>
            <person name="Adachi Y."/>
            <person name="Matsui T."/>
            <person name="Bessho Y."/>
            <person name="Tanaka T."/>
            <person name="Nishimura Y."/>
        </authorList>
    </citation>
    <scope>FUNCTION</scope>
    <scope>DISRUPTION PHENOTYPE</scope>
    <scope>DEVELOPMENTAL STAGE</scope>
</reference>
<evidence type="ECO:0000256" key="1">
    <source>
        <dbReference type="SAM" id="MobiDB-lite"/>
    </source>
</evidence>
<evidence type="ECO:0000269" key="2">
    <source>
    </source>
</evidence>
<evidence type="ECO:0000303" key="3">
    <source>
    </source>
</evidence>
<evidence type="ECO:0000305" key="4"/>
<comment type="function">
    <text evidence="2">Plays a role in neuronal and neurobehavioral development (PubMed:31623237). Required for normal expression of the postmitotic and mature neuron markers elavl3 and eno2 and neurobehaviors related to circadian rhythm and altered light-dark conditions (PubMed:31623237).</text>
</comment>
<comment type="developmental stage">
    <text evidence="2">Highly expressed in the gut, myotomes and brain, especially the midbrain and hindbrain, at 3 days post-fertilization (dpf).</text>
</comment>
<comment type="disruption phenotype">
    <text evidence="2">Double knockout of c3orf70a and c3orf70b resulted in significantly decreased expression of the mature neuron markers elavl3 and eno2 and the midbrain/hindbrain marker irx3b. Neurobehaviors related to circadian rhythm and altered light-dark conditions were significantly impaired.</text>
</comment>
<comment type="similarity">
    <text evidence="4">Belongs to the UPF0524 family.</text>
</comment>
<comment type="sequence caution" evidence="4">
    <conflict type="erroneous gene model prediction">
        <sequence resource="EMBL-CDS" id="CAP19437"/>
    </conflict>
</comment>
<protein>
    <recommendedName>
        <fullName>UPF0524 protein C3orf70 homolog B</fullName>
    </recommendedName>
</protein>
<accession>A3KNX6</accession>
<accession>A9C3V9</accession>
<accession>A9C3W0</accession>
<feature type="chain" id="PRO_0000319979" description="UPF0524 protein C3orf70 homolog B">
    <location>
        <begin position="1"/>
        <end position="249"/>
    </location>
</feature>
<feature type="region of interest" description="Disordered" evidence="1">
    <location>
        <begin position="174"/>
        <end position="230"/>
    </location>
</feature>
<feature type="compositionally biased region" description="Acidic residues" evidence="1">
    <location>
        <begin position="201"/>
        <end position="213"/>
    </location>
</feature>
<feature type="sequence conflict" description="In Ref. 2; AAI34061." evidence="4" ref="2">
    <original>Y</original>
    <variation>H</variation>
    <location>
        <position position="56"/>
    </location>
</feature>
<feature type="sequence conflict" description="In Ref. 2; AAI34061." evidence="4" ref="2">
    <original>A</original>
    <variation>P</variation>
    <location>
        <position position="110"/>
    </location>
</feature>
<keyword id="KW-0524">Neurogenesis</keyword>
<keyword id="KW-1185">Reference proteome</keyword>
<gene>
    <name evidence="3" type="primary">c3orf70b</name>
    <name type="ORF">si:dkeyp-30d5.1</name>
    <name type="ORF">zgc:162707</name>
</gene>
<name>CC70B_DANRE</name>
<dbReference type="EMBL" id="CR936497">
    <property type="protein sequence ID" value="CAP19436.1"/>
    <property type="molecule type" value="Genomic_DNA"/>
</dbReference>
<dbReference type="EMBL" id="CR936497">
    <property type="protein sequence ID" value="CAP19437.1"/>
    <property type="status" value="ALT_SEQ"/>
    <property type="molecule type" value="Genomic_DNA"/>
</dbReference>
<dbReference type="EMBL" id="BC134060">
    <property type="protein sequence ID" value="AAI34061.1"/>
    <property type="molecule type" value="mRNA"/>
</dbReference>
<dbReference type="RefSeq" id="NP_001082923.1">
    <property type="nucleotide sequence ID" value="NM_001089454.1"/>
</dbReference>
<dbReference type="RefSeq" id="XP_009302777.1">
    <property type="nucleotide sequence ID" value="XM_009304502.2"/>
</dbReference>
<dbReference type="FunCoup" id="A3KNX6">
    <property type="interactions" value="678"/>
</dbReference>
<dbReference type="STRING" id="7955.ENSDARP00000082632"/>
<dbReference type="PaxDb" id="7955-ENSDARP00000082632"/>
<dbReference type="Ensembl" id="ENSDART00000088199">
    <property type="protein sequence ID" value="ENSDARP00000082632"/>
    <property type="gene ID" value="ENSDARG00000061664"/>
</dbReference>
<dbReference type="Ensembl" id="ENSDART00000188952">
    <property type="protein sequence ID" value="ENSDARP00000155353"/>
    <property type="gene ID" value="ENSDARG00000061664"/>
</dbReference>
<dbReference type="GeneID" id="100002095"/>
<dbReference type="KEGG" id="dre:100002095"/>
<dbReference type="AGR" id="ZFIN:ZDB-GENE-070424-37"/>
<dbReference type="ZFIN" id="ZDB-GENE-070424-37">
    <property type="gene designation" value="zgc:162707"/>
</dbReference>
<dbReference type="eggNOG" id="ENOG502QQSJ">
    <property type="taxonomic scope" value="Eukaryota"/>
</dbReference>
<dbReference type="HOGENOM" id="CLU_081879_0_0_1"/>
<dbReference type="InParanoid" id="A3KNX6"/>
<dbReference type="OMA" id="GAHKCPK"/>
<dbReference type="OrthoDB" id="8924346at2759"/>
<dbReference type="PhylomeDB" id="A3KNX6"/>
<dbReference type="TreeFam" id="TF328625"/>
<dbReference type="PRO" id="PR:A3KNX6"/>
<dbReference type="Proteomes" id="UP000000437">
    <property type="component" value="Chromosome 9"/>
</dbReference>
<dbReference type="Bgee" id="ENSDARG00000061664">
    <property type="expression patterns" value="Expressed in head and 17 other cell types or tissues"/>
</dbReference>
<dbReference type="ExpressionAtlas" id="A3KNX6">
    <property type="expression patterns" value="differential"/>
</dbReference>
<dbReference type="GO" id="GO:0048512">
    <property type="term" value="P:circadian behavior"/>
    <property type="evidence" value="ECO:0000315"/>
    <property type="project" value="UniProtKB"/>
</dbReference>
<dbReference type="GO" id="GO:0007399">
    <property type="term" value="P:nervous system development"/>
    <property type="evidence" value="ECO:0000315"/>
    <property type="project" value="UniProtKB"/>
</dbReference>
<dbReference type="InterPro" id="IPR029670">
    <property type="entry name" value="UPF0524_fam"/>
</dbReference>
<dbReference type="PANTHER" id="PTHR31785">
    <property type="entry name" value="UPF0524 PROTEIN C3ORF70"/>
    <property type="match status" value="1"/>
</dbReference>
<dbReference type="PANTHER" id="PTHR31785:SF2">
    <property type="entry name" value="UPF0524 PROTEIN C3ORF70"/>
    <property type="match status" value="1"/>
</dbReference>
<dbReference type="Pfam" id="PF15823">
    <property type="entry name" value="UPF0524"/>
    <property type="match status" value="1"/>
</dbReference>
<organism>
    <name type="scientific">Danio rerio</name>
    <name type="common">Zebrafish</name>
    <name type="synonym">Brachydanio rerio</name>
    <dbReference type="NCBI Taxonomy" id="7955"/>
    <lineage>
        <taxon>Eukaryota</taxon>
        <taxon>Metazoa</taxon>
        <taxon>Chordata</taxon>
        <taxon>Craniata</taxon>
        <taxon>Vertebrata</taxon>
        <taxon>Euteleostomi</taxon>
        <taxon>Actinopterygii</taxon>
        <taxon>Neopterygii</taxon>
        <taxon>Teleostei</taxon>
        <taxon>Ostariophysi</taxon>
        <taxon>Cypriniformes</taxon>
        <taxon>Danionidae</taxon>
        <taxon>Danioninae</taxon>
        <taxon>Danio</taxon>
    </lineage>
</organism>
<proteinExistence type="evidence at transcript level"/>